<gene>
    <name evidence="1" type="primary">glgC</name>
    <name type="ordered locus">SPH_1215</name>
</gene>
<dbReference type="EC" id="2.7.7.27" evidence="1"/>
<dbReference type="EMBL" id="CP000936">
    <property type="protein sequence ID" value="ACA36230.1"/>
    <property type="molecule type" value="Genomic_DNA"/>
</dbReference>
<dbReference type="RefSeq" id="WP_000787276.1">
    <property type="nucleotide sequence ID" value="NC_010380.1"/>
</dbReference>
<dbReference type="SMR" id="B1IBQ8"/>
<dbReference type="KEGG" id="spv:SPH_1215"/>
<dbReference type="HOGENOM" id="CLU_029499_14_0_9"/>
<dbReference type="UniPathway" id="UPA00164"/>
<dbReference type="Proteomes" id="UP000002163">
    <property type="component" value="Chromosome"/>
</dbReference>
<dbReference type="GO" id="GO:0005524">
    <property type="term" value="F:ATP binding"/>
    <property type="evidence" value="ECO:0007669"/>
    <property type="project" value="UniProtKB-KW"/>
</dbReference>
<dbReference type="GO" id="GO:0008878">
    <property type="term" value="F:glucose-1-phosphate adenylyltransferase activity"/>
    <property type="evidence" value="ECO:0007669"/>
    <property type="project" value="UniProtKB-UniRule"/>
</dbReference>
<dbReference type="GO" id="GO:0005978">
    <property type="term" value="P:glycogen biosynthetic process"/>
    <property type="evidence" value="ECO:0007669"/>
    <property type="project" value="UniProtKB-UniRule"/>
</dbReference>
<dbReference type="CDD" id="cd02508">
    <property type="entry name" value="ADP_Glucose_PP"/>
    <property type="match status" value="1"/>
</dbReference>
<dbReference type="CDD" id="cd04651">
    <property type="entry name" value="LbH_G1P_AT_C"/>
    <property type="match status" value="1"/>
</dbReference>
<dbReference type="Gene3D" id="2.160.10.10">
    <property type="entry name" value="Hexapeptide repeat proteins"/>
    <property type="match status" value="1"/>
</dbReference>
<dbReference type="Gene3D" id="3.90.550.10">
    <property type="entry name" value="Spore Coat Polysaccharide Biosynthesis Protein SpsA, Chain A"/>
    <property type="match status" value="1"/>
</dbReference>
<dbReference type="HAMAP" id="MF_00624">
    <property type="entry name" value="GlgC"/>
    <property type="match status" value="1"/>
</dbReference>
<dbReference type="InterPro" id="IPR011831">
    <property type="entry name" value="ADP-Glc_PPase"/>
</dbReference>
<dbReference type="InterPro" id="IPR005836">
    <property type="entry name" value="ADP_Glu_pyroP_CS"/>
</dbReference>
<dbReference type="InterPro" id="IPR023049">
    <property type="entry name" value="GlgC_bac"/>
</dbReference>
<dbReference type="InterPro" id="IPR056818">
    <property type="entry name" value="GlmU/GlgC-like_hexapep"/>
</dbReference>
<dbReference type="InterPro" id="IPR005835">
    <property type="entry name" value="NTP_transferase_dom"/>
</dbReference>
<dbReference type="InterPro" id="IPR029044">
    <property type="entry name" value="Nucleotide-diphossugar_trans"/>
</dbReference>
<dbReference type="InterPro" id="IPR011004">
    <property type="entry name" value="Trimer_LpxA-like_sf"/>
</dbReference>
<dbReference type="NCBIfam" id="TIGR02091">
    <property type="entry name" value="glgC"/>
    <property type="match status" value="1"/>
</dbReference>
<dbReference type="NCBIfam" id="NF003670">
    <property type="entry name" value="PRK05293.1"/>
    <property type="match status" value="1"/>
</dbReference>
<dbReference type="PANTHER" id="PTHR43523:SF2">
    <property type="entry name" value="GLUCOSE-1-PHOSPHATE ADENYLYLTRANSFERASE"/>
    <property type="match status" value="1"/>
</dbReference>
<dbReference type="PANTHER" id="PTHR43523">
    <property type="entry name" value="GLUCOSE-1-PHOSPHATE ADENYLYLTRANSFERASE-RELATED"/>
    <property type="match status" value="1"/>
</dbReference>
<dbReference type="Pfam" id="PF24894">
    <property type="entry name" value="Hexapep_GlmU"/>
    <property type="match status" value="1"/>
</dbReference>
<dbReference type="Pfam" id="PF00483">
    <property type="entry name" value="NTP_transferase"/>
    <property type="match status" value="1"/>
</dbReference>
<dbReference type="SUPFAM" id="SSF53448">
    <property type="entry name" value="Nucleotide-diphospho-sugar transferases"/>
    <property type="match status" value="1"/>
</dbReference>
<dbReference type="SUPFAM" id="SSF51161">
    <property type="entry name" value="Trimeric LpxA-like enzymes"/>
    <property type="match status" value="1"/>
</dbReference>
<dbReference type="PROSITE" id="PS00808">
    <property type="entry name" value="ADP_GLC_PYROPHOSPH_1"/>
    <property type="match status" value="1"/>
</dbReference>
<dbReference type="PROSITE" id="PS00809">
    <property type="entry name" value="ADP_GLC_PYROPHOSPH_2"/>
    <property type="match status" value="1"/>
</dbReference>
<dbReference type="PROSITE" id="PS00810">
    <property type="entry name" value="ADP_GLC_PYROPHOSPH_3"/>
    <property type="match status" value="1"/>
</dbReference>
<reference key="1">
    <citation type="journal article" date="2010" name="Genome Biol.">
        <title>Structure and dynamics of the pan-genome of Streptococcus pneumoniae and closely related species.</title>
        <authorList>
            <person name="Donati C."/>
            <person name="Hiller N.L."/>
            <person name="Tettelin H."/>
            <person name="Muzzi A."/>
            <person name="Croucher N.J."/>
            <person name="Angiuoli S.V."/>
            <person name="Oggioni M."/>
            <person name="Dunning Hotopp J.C."/>
            <person name="Hu F.Z."/>
            <person name="Riley D.R."/>
            <person name="Covacci A."/>
            <person name="Mitchell T.J."/>
            <person name="Bentley S.D."/>
            <person name="Kilian M."/>
            <person name="Ehrlich G.D."/>
            <person name="Rappuoli R."/>
            <person name="Moxon E.R."/>
            <person name="Masignani V."/>
        </authorList>
    </citation>
    <scope>NUCLEOTIDE SEQUENCE [LARGE SCALE GENOMIC DNA]</scope>
    <source>
        <strain>Hungary19A-6</strain>
    </source>
</reference>
<name>GLGC_STRPI</name>
<proteinExistence type="inferred from homology"/>
<evidence type="ECO:0000255" key="1">
    <source>
        <dbReference type="HAMAP-Rule" id="MF_00624"/>
    </source>
</evidence>
<sequence>MKNEMLALILAGGQGTRLGKLTQSIAKPAVQFGGRYRIIDFALSNCANSGIHNVGVVTQYQPLALNNHIGNGSSWGLDGINSGVSILQPYSASEGNRWFEGTSHAIYQNIDYIDSVNPEYVLILSGDHIYKMDYDDMLQSHKDNNASLTVAVLDVPLKEASRFGIMNTDANNRIVEFEEKPAQPKSTKASMGIYIFDWQRLRNMLVAAEKSKVGMSDFGKNVIPNYLESGESVYAYEFSGYWKDVGTIESLWEANMEYISPENALDSRNRQWKIYSRNLISPPNFLGANAHVEDSLVVDGCFVDGTVKHSILSTGAQVREGAEVLDSVIMSGAIIGQGAKIKRAIIGEGAIISDGVEIDGTDEVQVVGYNEVVGVATDED</sequence>
<accession>B1IBQ8</accession>
<organism>
    <name type="scientific">Streptococcus pneumoniae (strain Hungary19A-6)</name>
    <dbReference type="NCBI Taxonomy" id="487214"/>
    <lineage>
        <taxon>Bacteria</taxon>
        <taxon>Bacillati</taxon>
        <taxon>Bacillota</taxon>
        <taxon>Bacilli</taxon>
        <taxon>Lactobacillales</taxon>
        <taxon>Streptococcaceae</taxon>
        <taxon>Streptococcus</taxon>
    </lineage>
</organism>
<feature type="chain" id="PRO_1000130506" description="Glucose-1-phosphate adenylyltransferase">
    <location>
        <begin position="1"/>
        <end position="380"/>
    </location>
</feature>
<feature type="binding site" evidence="1">
    <location>
        <position position="164"/>
    </location>
    <ligand>
        <name>alpha-D-glucose 1-phosphate</name>
        <dbReference type="ChEBI" id="CHEBI:58601"/>
    </ligand>
</feature>
<feature type="binding site" evidence="1">
    <location>
        <begin position="179"/>
        <end position="180"/>
    </location>
    <ligand>
        <name>alpha-D-glucose 1-phosphate</name>
        <dbReference type="ChEBI" id="CHEBI:58601"/>
    </ligand>
</feature>
<feature type="binding site" evidence="1">
    <location>
        <position position="190"/>
    </location>
    <ligand>
        <name>alpha-D-glucose 1-phosphate</name>
        <dbReference type="ChEBI" id="CHEBI:58601"/>
    </ligand>
</feature>
<comment type="function">
    <text evidence="1">Involved in the biosynthesis of ADP-glucose, a building block required for the elongation reactions to produce glycogen. Catalyzes the reaction between ATP and alpha-D-glucose 1-phosphate (G1P) to produce pyrophosphate and ADP-Glc.</text>
</comment>
<comment type="catalytic activity">
    <reaction evidence="1">
        <text>alpha-D-glucose 1-phosphate + ATP + H(+) = ADP-alpha-D-glucose + diphosphate</text>
        <dbReference type="Rhea" id="RHEA:12120"/>
        <dbReference type="ChEBI" id="CHEBI:15378"/>
        <dbReference type="ChEBI" id="CHEBI:30616"/>
        <dbReference type="ChEBI" id="CHEBI:33019"/>
        <dbReference type="ChEBI" id="CHEBI:57498"/>
        <dbReference type="ChEBI" id="CHEBI:58601"/>
        <dbReference type="EC" id="2.7.7.27"/>
    </reaction>
</comment>
<comment type="pathway">
    <text evidence="1">Glycan biosynthesis; glycogen biosynthesis.</text>
</comment>
<comment type="subunit">
    <text evidence="1">Homotetramer.</text>
</comment>
<comment type="similarity">
    <text evidence="1">Belongs to the bacterial/plant glucose-1-phosphate adenylyltransferase family.</text>
</comment>
<keyword id="KW-0067">ATP-binding</keyword>
<keyword id="KW-0119">Carbohydrate metabolism</keyword>
<keyword id="KW-0320">Glycogen biosynthesis</keyword>
<keyword id="KW-0321">Glycogen metabolism</keyword>
<keyword id="KW-0547">Nucleotide-binding</keyword>
<keyword id="KW-0548">Nucleotidyltransferase</keyword>
<keyword id="KW-0808">Transferase</keyword>
<protein>
    <recommendedName>
        <fullName evidence="1">Glucose-1-phosphate adenylyltransferase</fullName>
        <ecNumber evidence="1">2.7.7.27</ecNumber>
    </recommendedName>
    <alternativeName>
        <fullName evidence="1">ADP-glucose pyrophosphorylase</fullName>
        <shortName evidence="1">ADPGlc PPase</shortName>
    </alternativeName>
    <alternativeName>
        <fullName evidence="1">ADP-glucose synthase</fullName>
    </alternativeName>
</protein>